<proteinExistence type="evidence at transcript level"/>
<evidence type="ECO:0000250" key="1"/>
<evidence type="ECO:0000250" key="2">
    <source>
        <dbReference type="UniProtKB" id="Q495A1"/>
    </source>
</evidence>
<evidence type="ECO:0000255" key="3"/>
<evidence type="ECO:0000255" key="4">
    <source>
        <dbReference type="PROSITE-ProRule" id="PRU00114"/>
    </source>
</evidence>
<evidence type="ECO:0000256" key="5">
    <source>
        <dbReference type="SAM" id="MobiDB-lite"/>
    </source>
</evidence>
<evidence type="ECO:0000269" key="6">
    <source>
    </source>
</evidence>
<evidence type="ECO:0000312" key="7">
    <source>
        <dbReference type="MGI" id="MGI:3642260"/>
    </source>
</evidence>
<protein>
    <recommendedName>
        <fullName>T-cell immunoreceptor with Ig and ITIM domains</fullName>
    </recommendedName>
    <alternativeName>
        <fullName evidence="7">V-set and transmembrane domain-containing protein 3</fullName>
    </alternativeName>
</protein>
<organism>
    <name type="scientific">Mus musculus</name>
    <name type="common">Mouse</name>
    <dbReference type="NCBI Taxonomy" id="10090"/>
    <lineage>
        <taxon>Eukaryota</taxon>
        <taxon>Metazoa</taxon>
        <taxon>Chordata</taxon>
        <taxon>Craniata</taxon>
        <taxon>Vertebrata</taxon>
        <taxon>Euteleostomi</taxon>
        <taxon>Mammalia</taxon>
        <taxon>Eutheria</taxon>
        <taxon>Euarchontoglires</taxon>
        <taxon>Glires</taxon>
        <taxon>Rodentia</taxon>
        <taxon>Myomorpha</taxon>
        <taxon>Muroidea</taxon>
        <taxon>Muridae</taxon>
        <taxon>Murinae</taxon>
        <taxon>Mus</taxon>
        <taxon>Mus</taxon>
    </lineage>
</organism>
<gene>
    <name evidence="7" type="primary">Tigit</name>
    <name evidence="7" type="synonym">Vstm3</name>
</gene>
<accession>P86176</accession>
<comment type="function">
    <text evidence="2">Inhibitory receptor that plays a role in the modulation of immune responses. Suppresses T-cell activation by promoting the generation of mature immunoregulatory dendritic cells. Upon binding to its ligands PVR/CD155 or NECTIN2/CD112, which are expressed on antigen-presenting cells, sends inhibitory signals to the T-cell or NK cell. Mechanistically, interaction with ligand leads to phosphorylation of the cytoplasmic tail by Src family tyrosine kinases such as FYN or LCK, allowing subsequent binding to adapter GRB2 and SHIP1/INPP5D. In turn, inhibits PI3K and MAPK signaling cascades. In addition, associates with beta-arrestin-2/ARRB2 to recruit SHIP1/INPP5D that suppresses autoubiquitination of TRAF6 and subsequently inhibits NF-kappa-B signaling pathway. Also acts as a receptor for NECTIN4 to inhibit NK cell cytotoxicity.</text>
</comment>
<comment type="subunit">
    <text evidence="2">Homodimer in cis; binds with high affinity to PVR, forming a heterotetrameric assembly of two TIGIT and two PVR molecules. Binds with lower affinity to NECTIN2 and NECTIN3. Interacts with GRB2. Interacts with NECTIN4.</text>
</comment>
<comment type="subcellular location">
    <subcellularLocation>
        <location evidence="2">Cell membrane</location>
        <topology evidence="2">Single-pass type I membrane protein</topology>
    </subcellularLocation>
    <text evidence="2">Clustered to the immunological synapse where it disrupts granule polarization and cytotoxicity of NK cells once engaged with PVR.</text>
</comment>
<comment type="induction">
    <text evidence="6">Upon stimulation and mRNA levels steadily increased during the first 3 days of activation in both CD4(+) and CD8(+) T-cells.</text>
</comment>
<comment type="domain">
    <text evidence="2">Contains 1 copy of a cytoplasmic motif that is referred to as the immunoreceptor tyrosine-based inhibitor motif (ITIM). This motif is involved in modulation of cellular responses. The phosphorylated ITIM motif can bind the SH2 domain of several SH2-containing phosphatases.</text>
</comment>
<comment type="disruption phenotype">
    <text evidence="6">Deletion mice show augmented T-cell responses upon immunization demonstrating that TIGIT acts as a negative regulator of T-cell responses. In addition, tumor progression was slower in TIGIT knockout mice than in wild-type mice.</text>
</comment>
<feature type="signal peptide" evidence="3">
    <location>
        <begin position="1"/>
        <end position="28"/>
    </location>
</feature>
<feature type="chain" id="PRO_0000365029" description="T-cell immunoreceptor with Ig and ITIM domains">
    <location>
        <begin position="29"/>
        <end position="249"/>
    </location>
</feature>
<feature type="topological domain" description="Extracellular" evidence="3">
    <location>
        <begin position="29"/>
        <end position="148"/>
    </location>
</feature>
<feature type="transmembrane region" description="Helical" evidence="3">
    <location>
        <begin position="149"/>
        <end position="169"/>
    </location>
</feature>
<feature type="topological domain" description="Cytoplasmic" evidence="3">
    <location>
        <begin position="170"/>
        <end position="249"/>
    </location>
</feature>
<feature type="domain" description="Ig-like V-type" evidence="3">
    <location>
        <begin position="29"/>
        <end position="127"/>
    </location>
</feature>
<feature type="region of interest" description="Homodimerization" evidence="1">
    <location>
        <begin position="35"/>
        <end position="45"/>
    </location>
</feature>
<feature type="region of interest" description="Disordered" evidence="5">
    <location>
        <begin position="182"/>
        <end position="222"/>
    </location>
</feature>
<feature type="short sequence motif" description="ITIM motif" evidence="2">
    <location>
        <begin position="234"/>
        <end position="239"/>
    </location>
</feature>
<feature type="compositionally biased region" description="Polar residues" evidence="5">
    <location>
        <begin position="195"/>
        <end position="211"/>
    </location>
</feature>
<feature type="glycosylation site" description="N-linked (GlcNAc...) asparagine" evidence="3">
    <location>
        <position position="104"/>
    </location>
</feature>
<feature type="disulfide bond" evidence="4">
    <location>
        <begin position="48"/>
        <end position="111"/>
    </location>
</feature>
<reference key="1">
    <citation type="journal article" date="2009" name="PLoS Biol.">
        <title>Lineage-specific biology revealed by a finished genome assembly of the mouse.</title>
        <authorList>
            <person name="Church D.M."/>
            <person name="Goodstadt L."/>
            <person name="Hillier L.W."/>
            <person name="Zody M.C."/>
            <person name="Goldstein S."/>
            <person name="She X."/>
            <person name="Bult C.J."/>
            <person name="Agarwala R."/>
            <person name="Cherry J.L."/>
            <person name="DiCuccio M."/>
            <person name="Hlavina W."/>
            <person name="Kapustin Y."/>
            <person name="Meric P."/>
            <person name="Maglott D."/>
            <person name="Birtle Z."/>
            <person name="Marques A.C."/>
            <person name="Graves T."/>
            <person name="Zhou S."/>
            <person name="Teague B."/>
            <person name="Potamousis K."/>
            <person name="Churas C."/>
            <person name="Place M."/>
            <person name="Herschleb J."/>
            <person name="Runnheim R."/>
            <person name="Forrest D."/>
            <person name="Amos-Landgraf J."/>
            <person name="Schwartz D.C."/>
            <person name="Cheng Z."/>
            <person name="Lindblad-Toh K."/>
            <person name="Eichler E.E."/>
            <person name="Ponting C.P."/>
        </authorList>
    </citation>
    <scope>NUCLEOTIDE SEQUENCE [LARGE SCALE GENOMIC DNA]</scope>
    <source>
        <strain>C57BL/6J</strain>
    </source>
</reference>
<reference key="2">
    <citation type="journal article" date="2011" name="J. Immunol.">
        <title>Cutting edge: TIGIT has T cell-intrinsic inhibitory functions.</title>
        <authorList>
            <person name="Joller N."/>
            <person name="Hafler J.P."/>
            <person name="Brynedal B."/>
            <person name="Kassam N."/>
            <person name="Spoerl S."/>
            <person name="Levin S.D."/>
            <person name="Sharpe A.H."/>
            <person name="Kuchroo V.K."/>
        </authorList>
    </citation>
    <scope>FUNCTION</scope>
    <scope>DISRUPTION PHENOTYPE</scope>
    <scope>INDUCTION BY T-CELL ACTIVATION</scope>
</reference>
<name>TIGIT_MOUSE</name>
<keyword id="KW-1003">Cell membrane</keyword>
<keyword id="KW-1015">Disulfide bond</keyword>
<keyword id="KW-0325">Glycoprotein</keyword>
<keyword id="KW-0393">Immunoglobulin domain</keyword>
<keyword id="KW-0472">Membrane</keyword>
<keyword id="KW-1185">Reference proteome</keyword>
<keyword id="KW-0732">Signal</keyword>
<keyword id="KW-0812">Transmembrane</keyword>
<keyword id="KW-1133">Transmembrane helix</keyword>
<dbReference type="EMBL" id="AC120871">
    <property type="status" value="NOT_ANNOTATED_CDS"/>
    <property type="molecule type" value="Genomic_DNA"/>
</dbReference>
<dbReference type="EMBL" id="AC154408">
    <property type="status" value="NOT_ANNOTATED_CDS"/>
    <property type="molecule type" value="Genomic_DNA"/>
</dbReference>
<dbReference type="SMR" id="P86176"/>
<dbReference type="FunCoup" id="P86176">
    <property type="interactions" value="458"/>
</dbReference>
<dbReference type="STRING" id="10090.ENSMUSP00000093770"/>
<dbReference type="GlyCosmos" id="P86176">
    <property type="glycosylation" value="1 site, No reported glycans"/>
</dbReference>
<dbReference type="GlyGen" id="P86176">
    <property type="glycosylation" value="2 sites, 1 O-linked glycan (1 site)"/>
</dbReference>
<dbReference type="iPTMnet" id="P86176"/>
<dbReference type="PhosphoSitePlus" id="P86176"/>
<dbReference type="PaxDb" id="10090-ENSMUSP00000093770"/>
<dbReference type="ProteomicsDB" id="259449"/>
<dbReference type="ABCD" id="P86176">
    <property type="antibodies" value="2 sequenced antibodies"/>
</dbReference>
<dbReference type="UCSC" id="uc012afs.1">
    <property type="organism name" value="mouse"/>
</dbReference>
<dbReference type="AGR" id="MGI:3642260"/>
<dbReference type="MGI" id="MGI:3642260">
    <property type="gene designation" value="Tigit"/>
</dbReference>
<dbReference type="eggNOG" id="ENOG502SQW2">
    <property type="taxonomic scope" value="Eukaryota"/>
</dbReference>
<dbReference type="InParanoid" id="P86176"/>
<dbReference type="PhylomeDB" id="P86176"/>
<dbReference type="PRO" id="PR:P86176"/>
<dbReference type="Proteomes" id="UP000000589">
    <property type="component" value="Unplaced"/>
</dbReference>
<dbReference type="RNAct" id="P86176">
    <property type="molecule type" value="protein"/>
</dbReference>
<dbReference type="GO" id="GO:0009986">
    <property type="term" value="C:cell surface"/>
    <property type="evidence" value="ECO:0000250"/>
    <property type="project" value="UniProtKB"/>
</dbReference>
<dbReference type="GO" id="GO:0005886">
    <property type="term" value="C:plasma membrane"/>
    <property type="evidence" value="ECO:0007669"/>
    <property type="project" value="UniProtKB-SubCell"/>
</dbReference>
<dbReference type="GO" id="GO:0005102">
    <property type="term" value="F:signaling receptor binding"/>
    <property type="evidence" value="ECO:0000353"/>
    <property type="project" value="MGI"/>
</dbReference>
<dbReference type="GO" id="GO:0032695">
    <property type="term" value="P:negative regulation of interleukin-12 production"/>
    <property type="evidence" value="ECO:0000250"/>
    <property type="project" value="UniProtKB"/>
</dbReference>
<dbReference type="GO" id="GO:0050868">
    <property type="term" value="P:negative regulation of T cell activation"/>
    <property type="evidence" value="ECO:0000315"/>
    <property type="project" value="MGI"/>
</dbReference>
<dbReference type="GO" id="GO:0032733">
    <property type="term" value="P:positive regulation of interleukin-10 production"/>
    <property type="evidence" value="ECO:0000250"/>
    <property type="project" value="UniProtKB"/>
</dbReference>
<dbReference type="FunFam" id="2.60.40.10:FF:001182">
    <property type="entry name" value="T-cell immunoreceptor with Ig and ITIM domains"/>
    <property type="match status" value="1"/>
</dbReference>
<dbReference type="Gene3D" id="2.60.40.10">
    <property type="entry name" value="Immunoglobulins"/>
    <property type="match status" value="1"/>
</dbReference>
<dbReference type="InterPro" id="IPR007110">
    <property type="entry name" value="Ig-like_dom"/>
</dbReference>
<dbReference type="InterPro" id="IPR036179">
    <property type="entry name" value="Ig-like_dom_sf"/>
</dbReference>
<dbReference type="InterPro" id="IPR013783">
    <property type="entry name" value="Ig-like_fold"/>
</dbReference>
<dbReference type="InterPro" id="IPR003599">
    <property type="entry name" value="Ig_sub"/>
</dbReference>
<dbReference type="InterPro" id="IPR013106">
    <property type="entry name" value="Ig_V-set"/>
</dbReference>
<dbReference type="InterPro" id="IPR042948">
    <property type="entry name" value="TIGIT"/>
</dbReference>
<dbReference type="PANTHER" id="PTHR47734:SF1">
    <property type="entry name" value="T-CELL IMMUNORECEPTOR WITH IG AND ITIM DOMAINS"/>
    <property type="match status" value="1"/>
</dbReference>
<dbReference type="PANTHER" id="PTHR47734">
    <property type="entry name" value="T-CELL IMMUNORECEPTOR WITH IG AND ITIM DOMAINS PROTEIN, TIGIT"/>
    <property type="match status" value="1"/>
</dbReference>
<dbReference type="Pfam" id="PF07686">
    <property type="entry name" value="V-set"/>
    <property type="match status" value="1"/>
</dbReference>
<dbReference type="SMART" id="SM00409">
    <property type="entry name" value="IG"/>
    <property type="match status" value="1"/>
</dbReference>
<dbReference type="SMART" id="SM00406">
    <property type="entry name" value="IGv"/>
    <property type="match status" value="1"/>
</dbReference>
<dbReference type="SUPFAM" id="SSF48726">
    <property type="entry name" value="Immunoglobulin"/>
    <property type="match status" value="1"/>
</dbReference>
<dbReference type="PROSITE" id="PS50835">
    <property type="entry name" value="IG_LIKE"/>
    <property type="match status" value="1"/>
</dbReference>
<sequence>MHGWLLLVWVQGLIQAAFLATAIGATAGTIDTKRNISAEEGGSVILQCHFSSDTAEVTQVDWKQQDQLLAIYSVDLGWHVASVFSDRVVPGPSLGLTFQSLTMNDTGEYFCTYHTYPGGIYKGRIFLKVQESSDDRNGLAQFQTAPLGGTMAAVLGLICLMVTGVTVLARKDKSIRMHSIESGLGRTEAEPQEWNLRSLSSPGSPVQTQTAPAGPCGEQAEDDYADPQEYFNVLSYRSLESFIAVSKTG</sequence>